<name>ERA_ECOK1</name>
<accession>A1AE96</accession>
<proteinExistence type="inferred from homology"/>
<dbReference type="EMBL" id="CP000468">
    <property type="protein sequence ID" value="ABJ01986.1"/>
    <property type="molecule type" value="Genomic_DNA"/>
</dbReference>
<dbReference type="RefSeq" id="WP_000020737.1">
    <property type="nucleotide sequence ID" value="NZ_CADILS010000012.1"/>
</dbReference>
<dbReference type="SMR" id="A1AE96"/>
<dbReference type="GeneID" id="93774525"/>
<dbReference type="KEGG" id="ecv:APECO1_3965"/>
<dbReference type="HOGENOM" id="CLU_038009_1_2_6"/>
<dbReference type="Proteomes" id="UP000008216">
    <property type="component" value="Chromosome"/>
</dbReference>
<dbReference type="GO" id="GO:0005829">
    <property type="term" value="C:cytosol"/>
    <property type="evidence" value="ECO:0007669"/>
    <property type="project" value="TreeGrafter"/>
</dbReference>
<dbReference type="GO" id="GO:0005886">
    <property type="term" value="C:plasma membrane"/>
    <property type="evidence" value="ECO:0007669"/>
    <property type="project" value="UniProtKB-SubCell"/>
</dbReference>
<dbReference type="GO" id="GO:0005525">
    <property type="term" value="F:GTP binding"/>
    <property type="evidence" value="ECO:0007669"/>
    <property type="project" value="UniProtKB-UniRule"/>
</dbReference>
<dbReference type="GO" id="GO:0003924">
    <property type="term" value="F:GTPase activity"/>
    <property type="evidence" value="ECO:0007669"/>
    <property type="project" value="UniProtKB-UniRule"/>
</dbReference>
<dbReference type="GO" id="GO:0043024">
    <property type="term" value="F:ribosomal small subunit binding"/>
    <property type="evidence" value="ECO:0007669"/>
    <property type="project" value="TreeGrafter"/>
</dbReference>
<dbReference type="GO" id="GO:0070181">
    <property type="term" value="F:small ribosomal subunit rRNA binding"/>
    <property type="evidence" value="ECO:0007669"/>
    <property type="project" value="UniProtKB-UniRule"/>
</dbReference>
<dbReference type="GO" id="GO:0000028">
    <property type="term" value="P:ribosomal small subunit assembly"/>
    <property type="evidence" value="ECO:0007669"/>
    <property type="project" value="TreeGrafter"/>
</dbReference>
<dbReference type="CDD" id="cd04163">
    <property type="entry name" value="Era"/>
    <property type="match status" value="1"/>
</dbReference>
<dbReference type="CDD" id="cd22534">
    <property type="entry name" value="KH-II_Era"/>
    <property type="match status" value="1"/>
</dbReference>
<dbReference type="FunFam" id="3.30.300.20:FF:000003">
    <property type="entry name" value="GTPase Era"/>
    <property type="match status" value="1"/>
</dbReference>
<dbReference type="FunFam" id="3.40.50.300:FF:000094">
    <property type="entry name" value="GTPase Era"/>
    <property type="match status" value="1"/>
</dbReference>
<dbReference type="Gene3D" id="3.30.300.20">
    <property type="match status" value="1"/>
</dbReference>
<dbReference type="Gene3D" id="3.40.50.300">
    <property type="entry name" value="P-loop containing nucleotide triphosphate hydrolases"/>
    <property type="match status" value="1"/>
</dbReference>
<dbReference type="HAMAP" id="MF_00367">
    <property type="entry name" value="GTPase_Era"/>
    <property type="match status" value="1"/>
</dbReference>
<dbReference type="InterPro" id="IPR030388">
    <property type="entry name" value="G_ERA_dom"/>
</dbReference>
<dbReference type="InterPro" id="IPR006073">
    <property type="entry name" value="GTP-bd"/>
</dbReference>
<dbReference type="InterPro" id="IPR005662">
    <property type="entry name" value="GTPase_Era-like"/>
</dbReference>
<dbReference type="InterPro" id="IPR015946">
    <property type="entry name" value="KH_dom-like_a/b"/>
</dbReference>
<dbReference type="InterPro" id="IPR004044">
    <property type="entry name" value="KH_dom_type_2"/>
</dbReference>
<dbReference type="InterPro" id="IPR009019">
    <property type="entry name" value="KH_sf_prok-type"/>
</dbReference>
<dbReference type="InterPro" id="IPR027417">
    <property type="entry name" value="P-loop_NTPase"/>
</dbReference>
<dbReference type="InterPro" id="IPR005225">
    <property type="entry name" value="Small_GTP-bd"/>
</dbReference>
<dbReference type="NCBIfam" id="TIGR00436">
    <property type="entry name" value="era"/>
    <property type="match status" value="1"/>
</dbReference>
<dbReference type="NCBIfam" id="NF000908">
    <property type="entry name" value="PRK00089.1"/>
    <property type="match status" value="1"/>
</dbReference>
<dbReference type="NCBIfam" id="TIGR00231">
    <property type="entry name" value="small_GTP"/>
    <property type="match status" value="1"/>
</dbReference>
<dbReference type="PANTHER" id="PTHR42698">
    <property type="entry name" value="GTPASE ERA"/>
    <property type="match status" value="1"/>
</dbReference>
<dbReference type="PANTHER" id="PTHR42698:SF1">
    <property type="entry name" value="GTPASE ERA, MITOCHONDRIAL"/>
    <property type="match status" value="1"/>
</dbReference>
<dbReference type="Pfam" id="PF07650">
    <property type="entry name" value="KH_2"/>
    <property type="match status" value="1"/>
</dbReference>
<dbReference type="Pfam" id="PF01926">
    <property type="entry name" value="MMR_HSR1"/>
    <property type="match status" value="1"/>
</dbReference>
<dbReference type="SUPFAM" id="SSF52540">
    <property type="entry name" value="P-loop containing nucleoside triphosphate hydrolases"/>
    <property type="match status" value="1"/>
</dbReference>
<dbReference type="SUPFAM" id="SSF54814">
    <property type="entry name" value="Prokaryotic type KH domain (KH-domain type II)"/>
    <property type="match status" value="1"/>
</dbReference>
<dbReference type="PROSITE" id="PS51713">
    <property type="entry name" value="G_ERA"/>
    <property type="match status" value="1"/>
</dbReference>
<dbReference type="PROSITE" id="PS50823">
    <property type="entry name" value="KH_TYPE_2"/>
    <property type="match status" value="1"/>
</dbReference>
<comment type="function">
    <text evidence="1">An essential GTPase that binds both GDP and GTP, with rapid nucleotide exchange. Plays a role in 16S rRNA processing and 30S ribosomal subunit biogenesis and possibly also in cell cycle regulation and energy metabolism.</text>
</comment>
<comment type="subunit">
    <text evidence="1">Monomer.</text>
</comment>
<comment type="subcellular location">
    <subcellularLocation>
        <location>Cytoplasm</location>
    </subcellularLocation>
    <subcellularLocation>
        <location evidence="1">Cell inner membrane</location>
        <topology evidence="1">Peripheral membrane protein</topology>
    </subcellularLocation>
</comment>
<comment type="similarity">
    <text evidence="1 2">Belongs to the TRAFAC class TrmE-Era-EngA-EngB-Septin-like GTPase superfamily. Era GTPase family.</text>
</comment>
<feature type="chain" id="PRO_1000079688" description="GTPase Era">
    <location>
        <begin position="1"/>
        <end position="301"/>
    </location>
</feature>
<feature type="domain" description="Era-type G" evidence="2">
    <location>
        <begin position="7"/>
        <end position="175"/>
    </location>
</feature>
<feature type="domain" description="KH type-2" evidence="1">
    <location>
        <begin position="206"/>
        <end position="283"/>
    </location>
</feature>
<feature type="region of interest" description="G1" evidence="2">
    <location>
        <begin position="15"/>
        <end position="22"/>
    </location>
</feature>
<feature type="region of interest" description="G2" evidence="2">
    <location>
        <begin position="41"/>
        <end position="45"/>
    </location>
</feature>
<feature type="region of interest" description="G3" evidence="2">
    <location>
        <begin position="62"/>
        <end position="65"/>
    </location>
</feature>
<feature type="region of interest" description="G4" evidence="2">
    <location>
        <begin position="124"/>
        <end position="127"/>
    </location>
</feature>
<feature type="region of interest" description="G5" evidence="2">
    <location>
        <begin position="154"/>
        <end position="156"/>
    </location>
</feature>
<feature type="binding site" evidence="1">
    <location>
        <begin position="15"/>
        <end position="22"/>
    </location>
    <ligand>
        <name>GTP</name>
        <dbReference type="ChEBI" id="CHEBI:37565"/>
    </ligand>
</feature>
<feature type="binding site" evidence="1">
    <location>
        <begin position="62"/>
        <end position="66"/>
    </location>
    <ligand>
        <name>GTP</name>
        <dbReference type="ChEBI" id="CHEBI:37565"/>
    </ligand>
</feature>
<feature type="binding site" evidence="1">
    <location>
        <begin position="124"/>
        <end position="127"/>
    </location>
    <ligand>
        <name>GTP</name>
        <dbReference type="ChEBI" id="CHEBI:37565"/>
    </ligand>
</feature>
<organism>
    <name type="scientific">Escherichia coli O1:K1 / APEC</name>
    <dbReference type="NCBI Taxonomy" id="405955"/>
    <lineage>
        <taxon>Bacteria</taxon>
        <taxon>Pseudomonadati</taxon>
        <taxon>Pseudomonadota</taxon>
        <taxon>Gammaproteobacteria</taxon>
        <taxon>Enterobacterales</taxon>
        <taxon>Enterobacteriaceae</taxon>
        <taxon>Escherichia</taxon>
    </lineage>
</organism>
<protein>
    <recommendedName>
        <fullName evidence="1">GTPase Era</fullName>
    </recommendedName>
</protein>
<keyword id="KW-0997">Cell inner membrane</keyword>
<keyword id="KW-1003">Cell membrane</keyword>
<keyword id="KW-0963">Cytoplasm</keyword>
<keyword id="KW-0342">GTP-binding</keyword>
<keyword id="KW-0472">Membrane</keyword>
<keyword id="KW-0547">Nucleotide-binding</keyword>
<keyword id="KW-1185">Reference proteome</keyword>
<keyword id="KW-0690">Ribosome biogenesis</keyword>
<keyword id="KW-0694">RNA-binding</keyword>
<keyword id="KW-0699">rRNA-binding</keyword>
<gene>
    <name evidence="1" type="primary">era</name>
    <name type="ordered locus">Ecok1_24920</name>
    <name type="ORF">APECO1_3965</name>
</gene>
<reference key="1">
    <citation type="journal article" date="2007" name="J. Bacteriol.">
        <title>The genome sequence of avian pathogenic Escherichia coli strain O1:K1:H7 shares strong similarities with human extraintestinal pathogenic E. coli genomes.</title>
        <authorList>
            <person name="Johnson T.J."/>
            <person name="Kariyawasam S."/>
            <person name="Wannemuehler Y."/>
            <person name="Mangiamele P."/>
            <person name="Johnson S.J."/>
            <person name="Doetkott C."/>
            <person name="Skyberg J.A."/>
            <person name="Lynne A.M."/>
            <person name="Johnson J.R."/>
            <person name="Nolan L.K."/>
        </authorList>
    </citation>
    <scope>NUCLEOTIDE SEQUENCE [LARGE SCALE GENOMIC DNA]</scope>
</reference>
<sequence>MSIDKSYCGFIAIVGRPNVGKSTLLNKLLGQKISITSRKAQTTRHRIVGIHTEGAYQAIYVDTPGLHMEEKRAINRLMNKAASSSIGDVELVIFVVEGTRWTPDDEMVLNKLRDGKAPVILAVNKVDNVQEKADLLPHLQFLASQMNFLDIVPISAETGLNVDTIAAIVRKHLPEATHHFPEDYITDRSQRFMASEIIREKLMRFLGAELPYSVTVEIERFVSNERGGYDINGLILVEREGQKKMVIGNKGAKIKTIGIEARKDMQEMFEAPVHLELWVKVKSGWADDERALRSLGYVDDL</sequence>
<evidence type="ECO:0000255" key="1">
    <source>
        <dbReference type="HAMAP-Rule" id="MF_00367"/>
    </source>
</evidence>
<evidence type="ECO:0000255" key="2">
    <source>
        <dbReference type="PROSITE-ProRule" id="PRU01050"/>
    </source>
</evidence>